<name>SECA_YERPP</name>
<organism>
    <name type="scientific">Yersinia pestis (strain Pestoides F)</name>
    <dbReference type="NCBI Taxonomy" id="386656"/>
    <lineage>
        <taxon>Bacteria</taxon>
        <taxon>Pseudomonadati</taxon>
        <taxon>Pseudomonadota</taxon>
        <taxon>Gammaproteobacteria</taxon>
        <taxon>Enterobacterales</taxon>
        <taxon>Yersiniaceae</taxon>
        <taxon>Yersinia</taxon>
    </lineage>
</organism>
<comment type="function">
    <text evidence="1">Part of the Sec protein translocase complex. Interacts with the SecYEG preprotein conducting channel. Has a central role in coupling the hydrolysis of ATP to the transfer of proteins into and across the cell membrane, serving both as a receptor for the preprotein-SecB complex and as an ATP-driven molecular motor driving the stepwise translocation of polypeptide chains across the membrane.</text>
</comment>
<comment type="catalytic activity">
    <reaction evidence="1">
        <text>ATP + H2O + cellular proteinSide 1 = ADP + phosphate + cellular proteinSide 2.</text>
        <dbReference type="EC" id="7.4.2.8"/>
    </reaction>
</comment>
<comment type="cofactor">
    <cofactor evidence="1">
        <name>Zn(2+)</name>
        <dbReference type="ChEBI" id="CHEBI:29105"/>
    </cofactor>
    <text evidence="1">May bind 1 zinc ion per subunit.</text>
</comment>
<comment type="subunit">
    <text evidence="1">Monomer and homodimer. Part of the essential Sec protein translocation apparatus which comprises SecA, SecYEG and auxiliary proteins SecDF-YajC and YidC.</text>
</comment>
<comment type="subcellular location">
    <subcellularLocation>
        <location evidence="1">Cell inner membrane</location>
        <topology evidence="1">Peripheral membrane protein</topology>
        <orientation evidence="1">Cytoplasmic side</orientation>
    </subcellularLocation>
    <subcellularLocation>
        <location evidence="1">Cytoplasm</location>
    </subcellularLocation>
    <text evidence="1">Distribution is 50-50.</text>
</comment>
<comment type="induction">
    <text evidence="1">Repressed under conditions of excess protein secretion capacity and derepressed when protein secretion becomes limiting. This is regulated by SecM.</text>
</comment>
<comment type="similarity">
    <text evidence="1">Belongs to the SecA family.</text>
</comment>
<proteinExistence type="inferred from homology"/>
<feature type="chain" id="PRO_0000321054" description="Protein translocase subunit SecA">
    <location>
        <begin position="1"/>
        <end position="904"/>
    </location>
</feature>
<feature type="region of interest" description="Disordered" evidence="2">
    <location>
        <begin position="851"/>
        <end position="870"/>
    </location>
</feature>
<feature type="binding site" evidence="1">
    <location>
        <position position="87"/>
    </location>
    <ligand>
        <name>ATP</name>
        <dbReference type="ChEBI" id="CHEBI:30616"/>
    </ligand>
</feature>
<feature type="binding site" evidence="1">
    <location>
        <begin position="105"/>
        <end position="109"/>
    </location>
    <ligand>
        <name>ATP</name>
        <dbReference type="ChEBI" id="CHEBI:30616"/>
    </ligand>
</feature>
<feature type="binding site" evidence="1">
    <location>
        <position position="512"/>
    </location>
    <ligand>
        <name>ATP</name>
        <dbReference type="ChEBI" id="CHEBI:30616"/>
    </ligand>
</feature>
<feature type="binding site" evidence="1">
    <location>
        <position position="888"/>
    </location>
    <ligand>
        <name>Zn(2+)</name>
        <dbReference type="ChEBI" id="CHEBI:29105"/>
    </ligand>
</feature>
<feature type="binding site" evidence="1">
    <location>
        <position position="890"/>
    </location>
    <ligand>
        <name>Zn(2+)</name>
        <dbReference type="ChEBI" id="CHEBI:29105"/>
    </ligand>
</feature>
<feature type="binding site" evidence="1">
    <location>
        <position position="899"/>
    </location>
    <ligand>
        <name>Zn(2+)</name>
        <dbReference type="ChEBI" id="CHEBI:29105"/>
    </ligand>
</feature>
<feature type="binding site" evidence="1">
    <location>
        <position position="900"/>
    </location>
    <ligand>
        <name>Zn(2+)</name>
        <dbReference type="ChEBI" id="CHEBI:29105"/>
    </ligand>
</feature>
<dbReference type="EC" id="7.4.2.8" evidence="1"/>
<dbReference type="EMBL" id="CP000668">
    <property type="protein sequence ID" value="ABP41436.1"/>
    <property type="molecule type" value="Genomic_DNA"/>
</dbReference>
<dbReference type="RefSeq" id="WP_002210426.1">
    <property type="nucleotide sequence ID" value="NZ_CP009715.1"/>
</dbReference>
<dbReference type="BMRB" id="A4TQ74"/>
<dbReference type="SMR" id="A4TQ74"/>
<dbReference type="GeneID" id="57974051"/>
<dbReference type="KEGG" id="ypp:YPDSF_3078"/>
<dbReference type="PATRIC" id="fig|386656.14.peg.1282"/>
<dbReference type="GO" id="GO:0031522">
    <property type="term" value="C:cell envelope Sec protein transport complex"/>
    <property type="evidence" value="ECO:0007669"/>
    <property type="project" value="TreeGrafter"/>
</dbReference>
<dbReference type="GO" id="GO:0005829">
    <property type="term" value="C:cytosol"/>
    <property type="evidence" value="ECO:0007669"/>
    <property type="project" value="TreeGrafter"/>
</dbReference>
<dbReference type="GO" id="GO:0005886">
    <property type="term" value="C:plasma membrane"/>
    <property type="evidence" value="ECO:0007669"/>
    <property type="project" value="UniProtKB-SubCell"/>
</dbReference>
<dbReference type="GO" id="GO:0005524">
    <property type="term" value="F:ATP binding"/>
    <property type="evidence" value="ECO:0007669"/>
    <property type="project" value="UniProtKB-UniRule"/>
</dbReference>
<dbReference type="GO" id="GO:0046872">
    <property type="term" value="F:metal ion binding"/>
    <property type="evidence" value="ECO:0007669"/>
    <property type="project" value="UniProtKB-KW"/>
</dbReference>
<dbReference type="GO" id="GO:0008564">
    <property type="term" value="F:protein-exporting ATPase activity"/>
    <property type="evidence" value="ECO:0007669"/>
    <property type="project" value="UniProtKB-EC"/>
</dbReference>
<dbReference type="GO" id="GO:0065002">
    <property type="term" value="P:intracellular protein transmembrane transport"/>
    <property type="evidence" value="ECO:0007669"/>
    <property type="project" value="UniProtKB-UniRule"/>
</dbReference>
<dbReference type="GO" id="GO:0017038">
    <property type="term" value="P:protein import"/>
    <property type="evidence" value="ECO:0007669"/>
    <property type="project" value="InterPro"/>
</dbReference>
<dbReference type="GO" id="GO:0006605">
    <property type="term" value="P:protein targeting"/>
    <property type="evidence" value="ECO:0007669"/>
    <property type="project" value="UniProtKB-UniRule"/>
</dbReference>
<dbReference type="GO" id="GO:0043952">
    <property type="term" value="P:protein transport by the Sec complex"/>
    <property type="evidence" value="ECO:0007669"/>
    <property type="project" value="TreeGrafter"/>
</dbReference>
<dbReference type="CDD" id="cd17928">
    <property type="entry name" value="DEXDc_SecA"/>
    <property type="match status" value="1"/>
</dbReference>
<dbReference type="CDD" id="cd18803">
    <property type="entry name" value="SF2_C_secA"/>
    <property type="match status" value="1"/>
</dbReference>
<dbReference type="FunFam" id="1.10.3060.10:FF:000001">
    <property type="entry name" value="Preprotein translocase subunit SecA"/>
    <property type="match status" value="1"/>
</dbReference>
<dbReference type="FunFam" id="3.40.50.300:FF:000081">
    <property type="entry name" value="Preprotein translocase subunit SecA"/>
    <property type="match status" value="1"/>
</dbReference>
<dbReference type="FunFam" id="3.40.50.300:FF:000113">
    <property type="entry name" value="Preprotein translocase subunit SecA"/>
    <property type="match status" value="1"/>
</dbReference>
<dbReference type="FunFam" id="3.90.1440.10:FF:000001">
    <property type="entry name" value="Preprotein translocase subunit SecA"/>
    <property type="match status" value="1"/>
</dbReference>
<dbReference type="Gene3D" id="1.10.3060.10">
    <property type="entry name" value="Helical scaffold and wing domains of SecA"/>
    <property type="match status" value="1"/>
</dbReference>
<dbReference type="Gene3D" id="3.40.50.300">
    <property type="entry name" value="P-loop containing nucleotide triphosphate hydrolases"/>
    <property type="match status" value="2"/>
</dbReference>
<dbReference type="Gene3D" id="3.90.1440.10">
    <property type="entry name" value="SecA, preprotein cross-linking domain"/>
    <property type="match status" value="1"/>
</dbReference>
<dbReference type="HAMAP" id="MF_01382">
    <property type="entry name" value="SecA"/>
    <property type="match status" value="1"/>
</dbReference>
<dbReference type="InterPro" id="IPR014001">
    <property type="entry name" value="Helicase_ATP-bd"/>
</dbReference>
<dbReference type="InterPro" id="IPR027417">
    <property type="entry name" value="P-loop_NTPase"/>
</dbReference>
<dbReference type="InterPro" id="IPR004027">
    <property type="entry name" value="SEC_C_motif"/>
</dbReference>
<dbReference type="InterPro" id="IPR000185">
    <property type="entry name" value="SecA"/>
</dbReference>
<dbReference type="InterPro" id="IPR020937">
    <property type="entry name" value="SecA_CS"/>
</dbReference>
<dbReference type="InterPro" id="IPR011115">
    <property type="entry name" value="SecA_DEAD"/>
</dbReference>
<dbReference type="InterPro" id="IPR014018">
    <property type="entry name" value="SecA_motor_DEAD"/>
</dbReference>
<dbReference type="InterPro" id="IPR011130">
    <property type="entry name" value="SecA_preprotein_X-link_dom"/>
</dbReference>
<dbReference type="InterPro" id="IPR044722">
    <property type="entry name" value="SecA_SF2_C"/>
</dbReference>
<dbReference type="InterPro" id="IPR011116">
    <property type="entry name" value="SecA_Wing/Scaffold"/>
</dbReference>
<dbReference type="InterPro" id="IPR036266">
    <property type="entry name" value="SecA_Wing/Scaffold_sf"/>
</dbReference>
<dbReference type="InterPro" id="IPR036670">
    <property type="entry name" value="SecA_X-link_sf"/>
</dbReference>
<dbReference type="NCBIfam" id="NF009538">
    <property type="entry name" value="PRK12904.1"/>
    <property type="match status" value="1"/>
</dbReference>
<dbReference type="NCBIfam" id="TIGR00963">
    <property type="entry name" value="secA"/>
    <property type="match status" value="1"/>
</dbReference>
<dbReference type="PANTHER" id="PTHR30612:SF0">
    <property type="entry name" value="CHLOROPLAST PROTEIN-TRANSPORTING ATPASE"/>
    <property type="match status" value="1"/>
</dbReference>
<dbReference type="PANTHER" id="PTHR30612">
    <property type="entry name" value="SECA INNER MEMBRANE COMPONENT OF SEC PROTEIN SECRETION SYSTEM"/>
    <property type="match status" value="1"/>
</dbReference>
<dbReference type="Pfam" id="PF21090">
    <property type="entry name" value="P-loop_SecA"/>
    <property type="match status" value="1"/>
</dbReference>
<dbReference type="Pfam" id="PF02810">
    <property type="entry name" value="SEC-C"/>
    <property type="match status" value="1"/>
</dbReference>
<dbReference type="Pfam" id="PF07517">
    <property type="entry name" value="SecA_DEAD"/>
    <property type="match status" value="1"/>
</dbReference>
<dbReference type="Pfam" id="PF01043">
    <property type="entry name" value="SecA_PP_bind"/>
    <property type="match status" value="1"/>
</dbReference>
<dbReference type="Pfam" id="PF07516">
    <property type="entry name" value="SecA_SW"/>
    <property type="match status" value="1"/>
</dbReference>
<dbReference type="PRINTS" id="PR00906">
    <property type="entry name" value="SECA"/>
</dbReference>
<dbReference type="SMART" id="SM00957">
    <property type="entry name" value="SecA_DEAD"/>
    <property type="match status" value="1"/>
</dbReference>
<dbReference type="SMART" id="SM00958">
    <property type="entry name" value="SecA_PP_bind"/>
    <property type="match status" value="1"/>
</dbReference>
<dbReference type="SUPFAM" id="SSF81886">
    <property type="entry name" value="Helical scaffold and wing domains of SecA"/>
    <property type="match status" value="1"/>
</dbReference>
<dbReference type="SUPFAM" id="SSF52540">
    <property type="entry name" value="P-loop containing nucleoside triphosphate hydrolases"/>
    <property type="match status" value="2"/>
</dbReference>
<dbReference type="SUPFAM" id="SSF81767">
    <property type="entry name" value="Pre-protein crosslinking domain of SecA"/>
    <property type="match status" value="1"/>
</dbReference>
<dbReference type="PROSITE" id="PS01312">
    <property type="entry name" value="SECA"/>
    <property type="match status" value="1"/>
</dbReference>
<dbReference type="PROSITE" id="PS51196">
    <property type="entry name" value="SECA_MOTOR_DEAD"/>
    <property type="match status" value="1"/>
</dbReference>
<protein>
    <recommendedName>
        <fullName evidence="1">Protein translocase subunit SecA</fullName>
        <ecNumber evidence="1">7.4.2.8</ecNumber>
    </recommendedName>
</protein>
<evidence type="ECO:0000255" key="1">
    <source>
        <dbReference type="HAMAP-Rule" id="MF_01382"/>
    </source>
</evidence>
<evidence type="ECO:0000256" key="2">
    <source>
        <dbReference type="SAM" id="MobiDB-lite"/>
    </source>
</evidence>
<sequence>MLIKLLTKVFGSRNDRTLRRMQKVVDVINRMEPDIEKLTDTELRAKTDEFRERLAKGEVLENLIPEAFAVVREASKRVFGMRHFDVQLLGGMVLNERCIAEMRTGEGKTLTATLPAYLNALSGRGVHVVTVNDYLAQRDAENNRPLFEFLGLSIGINLPNMTAPAKRAAYAADITYGTNNEFGFDYLRDNMAFSPEERVQRQLHYALVDEVDSILIDEARTPLIISGPAEDSSEMYIRVNKLIPKLIRQEKEDSDSFQGEGHFSVDEKSRQVHLTERGLILIEQMLVEAGIMDEGESLYSPANIMLMHHVTAALRAHVLFTRDVDYIVKDGEVIIVDEHTGRTMQGRRWSDGLHQAVEAKEGVEIQNENQTLASITFQNYFRLYEKLAGMTGTADTEAFEFSSIYKLDTIVVPTNRPMIRKDLADLVYMTEQEKIGAIIEDIRERTANGQPVLVGTISIEKSEVVSAELTKAGIEHKVLNAKFHAMEAEIVSQAGQPGAVTIATNMAGRGTDIVLGGSWQSEIAALEDPTEEQIAAIKAAWQIRHDAVLASGGLHIIGTERHESRRIDNQLRGRAGRQGDAGSSRFYLSMEDALMRIFASDRVSGMMRKLGMKPGEAIEHPWVTKAIANAQRKVESRNFDIRKQLLEYDDVANDQRRAIYSQRNELLDVSDVSETINSIREDVFKTTIDSYIPTQSLEEMWDIEGLEQRLKNDFDLDMPIAKWLEDEPQLHEETLRERILQQAIETYQRKEEVVGIEMMRNFEKGVMLQTLDSLWKEHLAAMDYLRQGIHLRGYAQKDPKQEYKRESFAMFAAMLESLKYEVISVLSKVQVRMPEEVEALEVQRREEAERLARQQQLSHQTDNSALMSEEEVKVANSLERKVGRNDPCPCGSGKKYKQCHGRLQ</sequence>
<reference key="1">
    <citation type="submission" date="2007-02" db="EMBL/GenBank/DDBJ databases">
        <title>Complete sequence of chromosome of Yersinia pestis Pestoides F.</title>
        <authorList>
            <consortium name="US DOE Joint Genome Institute"/>
            <person name="Copeland A."/>
            <person name="Lucas S."/>
            <person name="Lapidus A."/>
            <person name="Barry K."/>
            <person name="Detter J.C."/>
            <person name="Glavina del Rio T."/>
            <person name="Hammon N."/>
            <person name="Israni S."/>
            <person name="Dalin E."/>
            <person name="Tice H."/>
            <person name="Pitluck S."/>
            <person name="Di Bartolo G."/>
            <person name="Chain P."/>
            <person name="Malfatti S."/>
            <person name="Shin M."/>
            <person name="Vergez L."/>
            <person name="Schmutz J."/>
            <person name="Larimer F."/>
            <person name="Land M."/>
            <person name="Hauser L."/>
            <person name="Worsham P."/>
            <person name="Chu M."/>
            <person name="Bearden S."/>
            <person name="Garcia E."/>
            <person name="Richardson P."/>
        </authorList>
    </citation>
    <scope>NUCLEOTIDE SEQUENCE [LARGE SCALE GENOMIC DNA]</scope>
    <source>
        <strain>Pestoides F</strain>
    </source>
</reference>
<accession>A4TQ74</accession>
<gene>
    <name evidence="1" type="primary">secA</name>
    <name type="ordered locus">YPDSF_3078</name>
</gene>
<keyword id="KW-0067">ATP-binding</keyword>
<keyword id="KW-0997">Cell inner membrane</keyword>
<keyword id="KW-1003">Cell membrane</keyword>
<keyword id="KW-0963">Cytoplasm</keyword>
<keyword id="KW-0472">Membrane</keyword>
<keyword id="KW-0479">Metal-binding</keyword>
<keyword id="KW-0547">Nucleotide-binding</keyword>
<keyword id="KW-0653">Protein transport</keyword>
<keyword id="KW-1278">Translocase</keyword>
<keyword id="KW-0811">Translocation</keyword>
<keyword id="KW-0813">Transport</keyword>
<keyword id="KW-0862">Zinc</keyword>